<name>PYRC_IDILO</name>
<reference key="1">
    <citation type="journal article" date="2004" name="Proc. Natl. Acad. Sci. U.S.A.">
        <title>Genome sequence of the deep-sea gamma-proteobacterium Idiomarina loihiensis reveals amino acid fermentation as a source of carbon and energy.</title>
        <authorList>
            <person name="Hou S."/>
            <person name="Saw J.H."/>
            <person name="Lee K.S."/>
            <person name="Freitas T.A."/>
            <person name="Belisle C."/>
            <person name="Kawarabayasi Y."/>
            <person name="Donachie S.P."/>
            <person name="Pikina A."/>
            <person name="Galperin M.Y."/>
            <person name="Koonin E.V."/>
            <person name="Makarova K.S."/>
            <person name="Omelchenko M.V."/>
            <person name="Sorokin A."/>
            <person name="Wolf Y.I."/>
            <person name="Li Q.X."/>
            <person name="Keum Y.S."/>
            <person name="Campbell S."/>
            <person name="Denery J."/>
            <person name="Aizawa S."/>
            <person name="Shibata S."/>
            <person name="Malahoff A."/>
            <person name="Alam M."/>
        </authorList>
    </citation>
    <scope>NUCLEOTIDE SEQUENCE [LARGE SCALE GENOMIC DNA]</scope>
    <source>
        <strain>ATCC BAA-735 / DSM 15497 / L2-TR</strain>
    </source>
</reference>
<keyword id="KW-0378">Hydrolase</keyword>
<keyword id="KW-0479">Metal-binding</keyword>
<keyword id="KW-0665">Pyrimidine biosynthesis</keyword>
<keyword id="KW-1185">Reference proteome</keyword>
<keyword id="KW-0862">Zinc</keyword>
<evidence type="ECO:0000255" key="1">
    <source>
        <dbReference type="HAMAP-Rule" id="MF_00219"/>
    </source>
</evidence>
<sequence>MQSLTIPRPDDWHLHLRDGAMLQTTVPATAAVFHRAVVMPNLVPPVTTVAAAMEYRERILAEIPAGMSFNPLMALYLTADTTPAEIAEAAANEHVIGFKLYPSGATTNSAAGVKSVEALAPVLAAMQEHQVPLLVHGEVTDSDIDIFDRERVFIERHLIPITERFPQLKLVLEHITTADAVKFVENANSNVAATMTPQHLLMNRNDLLVGGIRPHNYCLPILKRRSHQQALQQAALSGNPKFFLGTDSAPHVQANKETACGCAGCYSAPAAIELYAEFFSQHNALDKLANFASVFGADFYQLPRNTETIELVQQPWTVAETVDTATGPMVPYWAGSDLQWKLRG</sequence>
<organism>
    <name type="scientific">Idiomarina loihiensis (strain ATCC BAA-735 / DSM 15497 / L2-TR)</name>
    <dbReference type="NCBI Taxonomy" id="283942"/>
    <lineage>
        <taxon>Bacteria</taxon>
        <taxon>Pseudomonadati</taxon>
        <taxon>Pseudomonadota</taxon>
        <taxon>Gammaproteobacteria</taxon>
        <taxon>Alteromonadales</taxon>
        <taxon>Idiomarinaceae</taxon>
        <taxon>Idiomarina</taxon>
    </lineage>
</organism>
<comment type="function">
    <text evidence="1">Catalyzes the reversible cyclization of carbamoyl aspartate to dihydroorotate.</text>
</comment>
<comment type="catalytic activity">
    <reaction evidence="1">
        <text>(S)-dihydroorotate + H2O = N-carbamoyl-L-aspartate + H(+)</text>
        <dbReference type="Rhea" id="RHEA:24296"/>
        <dbReference type="ChEBI" id="CHEBI:15377"/>
        <dbReference type="ChEBI" id="CHEBI:15378"/>
        <dbReference type="ChEBI" id="CHEBI:30864"/>
        <dbReference type="ChEBI" id="CHEBI:32814"/>
        <dbReference type="EC" id="3.5.2.3"/>
    </reaction>
</comment>
<comment type="cofactor">
    <cofactor evidence="1">
        <name>Zn(2+)</name>
        <dbReference type="ChEBI" id="CHEBI:29105"/>
    </cofactor>
    <text evidence="1">Binds 2 Zn(2+) ions per subunit.</text>
</comment>
<comment type="pathway">
    <text evidence="1">Pyrimidine metabolism; UMP biosynthesis via de novo pathway; (S)-dihydroorotate from bicarbonate: step 3/3.</text>
</comment>
<comment type="subunit">
    <text evidence="1">Homodimer.</text>
</comment>
<comment type="similarity">
    <text evidence="1">Belongs to the metallo-dependent hydrolases superfamily. DHOase family. Class II DHOase subfamily.</text>
</comment>
<feature type="chain" id="PRO_1000024018" description="Dihydroorotase">
    <location>
        <begin position="1"/>
        <end position="344"/>
    </location>
</feature>
<feature type="active site" evidence="1">
    <location>
        <position position="247"/>
    </location>
</feature>
<feature type="binding site" evidence="1">
    <location>
        <position position="13"/>
    </location>
    <ligand>
        <name>Zn(2+)</name>
        <dbReference type="ChEBI" id="CHEBI:29105"/>
        <label>1</label>
    </ligand>
</feature>
<feature type="binding site" evidence="1">
    <location>
        <begin position="15"/>
        <end position="17"/>
    </location>
    <ligand>
        <name>substrate</name>
    </ligand>
</feature>
<feature type="binding site" evidence="1">
    <location>
        <position position="15"/>
    </location>
    <ligand>
        <name>Zn(2+)</name>
        <dbReference type="ChEBI" id="CHEBI:29105"/>
        <label>1</label>
    </ligand>
</feature>
<feature type="binding site" evidence="1">
    <location>
        <position position="41"/>
    </location>
    <ligand>
        <name>substrate</name>
    </ligand>
</feature>
<feature type="binding site" description="via carbamate group" evidence="1">
    <location>
        <position position="99"/>
    </location>
    <ligand>
        <name>Zn(2+)</name>
        <dbReference type="ChEBI" id="CHEBI:29105"/>
        <label>1</label>
    </ligand>
</feature>
<feature type="binding site" description="via carbamate group" evidence="1">
    <location>
        <position position="99"/>
    </location>
    <ligand>
        <name>Zn(2+)</name>
        <dbReference type="ChEBI" id="CHEBI:29105"/>
        <label>2</label>
    </ligand>
</feature>
<feature type="binding site" evidence="1">
    <location>
        <position position="136"/>
    </location>
    <ligand>
        <name>substrate</name>
    </ligand>
</feature>
<feature type="binding site" evidence="1">
    <location>
        <position position="136"/>
    </location>
    <ligand>
        <name>Zn(2+)</name>
        <dbReference type="ChEBI" id="CHEBI:29105"/>
        <label>2</label>
    </ligand>
</feature>
<feature type="binding site" evidence="1">
    <location>
        <position position="174"/>
    </location>
    <ligand>
        <name>Zn(2+)</name>
        <dbReference type="ChEBI" id="CHEBI:29105"/>
        <label>2</label>
    </ligand>
</feature>
<feature type="binding site" evidence="1">
    <location>
        <position position="219"/>
    </location>
    <ligand>
        <name>substrate</name>
    </ligand>
</feature>
<feature type="binding site" evidence="1">
    <location>
        <position position="247"/>
    </location>
    <ligand>
        <name>Zn(2+)</name>
        <dbReference type="ChEBI" id="CHEBI:29105"/>
        <label>1</label>
    </ligand>
</feature>
<feature type="binding site" evidence="1">
    <location>
        <position position="251"/>
    </location>
    <ligand>
        <name>substrate</name>
    </ligand>
</feature>
<feature type="binding site" evidence="1">
    <location>
        <position position="263"/>
    </location>
    <ligand>
        <name>substrate</name>
    </ligand>
</feature>
<feature type="modified residue" description="N6-carboxylysine" evidence="1">
    <location>
        <position position="99"/>
    </location>
</feature>
<gene>
    <name evidence="1" type="primary">pyrC</name>
    <name type="ordered locus">IL0362</name>
</gene>
<dbReference type="EC" id="3.5.2.3" evidence="1"/>
<dbReference type="EMBL" id="AE017340">
    <property type="protein sequence ID" value="AAV81205.1"/>
    <property type="molecule type" value="Genomic_DNA"/>
</dbReference>
<dbReference type="RefSeq" id="WP_011233623.1">
    <property type="nucleotide sequence ID" value="NC_006512.1"/>
</dbReference>
<dbReference type="SMR" id="Q5QWC6"/>
<dbReference type="STRING" id="283942.IL0362"/>
<dbReference type="MEROPS" id="M38.A02"/>
<dbReference type="GeneID" id="41335514"/>
<dbReference type="KEGG" id="ilo:IL0362"/>
<dbReference type="eggNOG" id="COG0418">
    <property type="taxonomic scope" value="Bacteria"/>
</dbReference>
<dbReference type="HOGENOM" id="CLU_041558_1_0_6"/>
<dbReference type="OrthoDB" id="9808095at2"/>
<dbReference type="UniPathway" id="UPA00070">
    <property type="reaction ID" value="UER00117"/>
</dbReference>
<dbReference type="Proteomes" id="UP000001171">
    <property type="component" value="Chromosome"/>
</dbReference>
<dbReference type="GO" id="GO:0005829">
    <property type="term" value="C:cytosol"/>
    <property type="evidence" value="ECO:0007669"/>
    <property type="project" value="TreeGrafter"/>
</dbReference>
<dbReference type="GO" id="GO:0004151">
    <property type="term" value="F:dihydroorotase activity"/>
    <property type="evidence" value="ECO:0007669"/>
    <property type="project" value="UniProtKB-UniRule"/>
</dbReference>
<dbReference type="GO" id="GO:0008270">
    <property type="term" value="F:zinc ion binding"/>
    <property type="evidence" value="ECO:0007669"/>
    <property type="project" value="UniProtKB-UniRule"/>
</dbReference>
<dbReference type="GO" id="GO:0006207">
    <property type="term" value="P:'de novo' pyrimidine nucleobase biosynthetic process"/>
    <property type="evidence" value="ECO:0007669"/>
    <property type="project" value="TreeGrafter"/>
</dbReference>
<dbReference type="GO" id="GO:0044205">
    <property type="term" value="P:'de novo' UMP biosynthetic process"/>
    <property type="evidence" value="ECO:0007669"/>
    <property type="project" value="UniProtKB-UniRule"/>
</dbReference>
<dbReference type="CDD" id="cd01294">
    <property type="entry name" value="DHOase"/>
    <property type="match status" value="1"/>
</dbReference>
<dbReference type="FunFam" id="3.20.20.140:FF:000006">
    <property type="entry name" value="Dihydroorotase"/>
    <property type="match status" value="1"/>
</dbReference>
<dbReference type="Gene3D" id="3.20.20.140">
    <property type="entry name" value="Metal-dependent hydrolases"/>
    <property type="match status" value="1"/>
</dbReference>
<dbReference type="HAMAP" id="MF_00219">
    <property type="entry name" value="PyrC_classII"/>
    <property type="match status" value="1"/>
</dbReference>
<dbReference type="InterPro" id="IPR006680">
    <property type="entry name" value="Amidohydro-rel"/>
</dbReference>
<dbReference type="InterPro" id="IPR004721">
    <property type="entry name" value="DHOdimr"/>
</dbReference>
<dbReference type="InterPro" id="IPR002195">
    <property type="entry name" value="Dihydroorotase_CS"/>
</dbReference>
<dbReference type="InterPro" id="IPR032466">
    <property type="entry name" value="Metal_Hydrolase"/>
</dbReference>
<dbReference type="NCBIfam" id="TIGR00856">
    <property type="entry name" value="pyrC_dimer"/>
    <property type="match status" value="1"/>
</dbReference>
<dbReference type="PANTHER" id="PTHR43137">
    <property type="entry name" value="DIHYDROOROTASE"/>
    <property type="match status" value="1"/>
</dbReference>
<dbReference type="PANTHER" id="PTHR43137:SF1">
    <property type="entry name" value="DIHYDROOROTASE"/>
    <property type="match status" value="1"/>
</dbReference>
<dbReference type="Pfam" id="PF01979">
    <property type="entry name" value="Amidohydro_1"/>
    <property type="match status" value="1"/>
</dbReference>
<dbReference type="PIRSF" id="PIRSF001237">
    <property type="entry name" value="DHOdimr"/>
    <property type="match status" value="1"/>
</dbReference>
<dbReference type="SUPFAM" id="SSF51556">
    <property type="entry name" value="Metallo-dependent hydrolases"/>
    <property type="match status" value="1"/>
</dbReference>
<dbReference type="PROSITE" id="PS00482">
    <property type="entry name" value="DIHYDROOROTASE_1"/>
    <property type="match status" value="1"/>
</dbReference>
<dbReference type="PROSITE" id="PS00483">
    <property type="entry name" value="DIHYDROOROTASE_2"/>
    <property type="match status" value="1"/>
</dbReference>
<protein>
    <recommendedName>
        <fullName evidence="1">Dihydroorotase</fullName>
        <shortName evidence="1">DHOase</shortName>
        <ecNumber evidence="1">3.5.2.3</ecNumber>
    </recommendedName>
</protein>
<proteinExistence type="inferred from homology"/>
<accession>Q5QWC6</accession>